<organism>
    <name type="scientific">Mesobuthus eupeus</name>
    <name type="common">Lesser Asian scorpion</name>
    <name type="synonym">Buthus eupeus</name>
    <dbReference type="NCBI Taxonomy" id="34648"/>
    <lineage>
        <taxon>Eukaryota</taxon>
        <taxon>Metazoa</taxon>
        <taxon>Ecdysozoa</taxon>
        <taxon>Arthropoda</taxon>
        <taxon>Chelicerata</taxon>
        <taxon>Arachnida</taxon>
        <taxon>Scorpiones</taxon>
        <taxon>Buthida</taxon>
        <taxon>Buthoidea</taxon>
        <taxon>Buthidae</taxon>
        <taxon>Mesobuthus</taxon>
    </lineage>
</organism>
<sequence>LVMAGVESGRDGHIARNNNCVYVCFIEYTYIGTSRINCNDLCTKNGAKSGYCHQFSEYGNSCWCIDLPDNVPIKVPGDCHLQ</sequence>
<comment type="function">
    <text evidence="1">Alpha toxins bind voltage-independently at site-3 of sodium channels (Nav) and inhibit the inactivation of the activated channels, thereby blocking neuronal transmission.</text>
</comment>
<comment type="subcellular location">
    <subcellularLocation>
        <location evidence="3">Secreted</location>
    </subcellularLocation>
</comment>
<comment type="tissue specificity">
    <text evidence="6">Expressed by the venom gland.</text>
</comment>
<comment type="domain">
    <text evidence="5">Has the structural arrangement of an alpha-helix connected to antiparallel beta-sheets by disulfide bonds (CS-alpha/beta).</text>
</comment>
<comment type="mass spectrometry"/>
<comment type="similarity">
    <text evidence="5">Belongs to the long (4 C-C) scorpion toxin superfamily. Sodium channel inhibitor family. Alpha subfamily.</text>
</comment>
<protein>
    <recommendedName>
        <fullName evidence="4">Sodium channel neurotoxin MeuNaTxalpha-3</fullName>
    </recommendedName>
</protein>
<dbReference type="EMBL" id="HM989911">
    <property type="protein sequence ID" value="ADT82851.1"/>
    <property type="molecule type" value="mRNA"/>
</dbReference>
<dbReference type="SMR" id="E7CZY8"/>
<dbReference type="GO" id="GO:0005576">
    <property type="term" value="C:extracellular region"/>
    <property type="evidence" value="ECO:0007669"/>
    <property type="project" value="UniProtKB-SubCell"/>
</dbReference>
<dbReference type="GO" id="GO:0019871">
    <property type="term" value="F:sodium channel inhibitor activity"/>
    <property type="evidence" value="ECO:0007669"/>
    <property type="project" value="InterPro"/>
</dbReference>
<dbReference type="GO" id="GO:0090729">
    <property type="term" value="F:toxin activity"/>
    <property type="evidence" value="ECO:0007669"/>
    <property type="project" value="UniProtKB-KW"/>
</dbReference>
<dbReference type="GO" id="GO:0006952">
    <property type="term" value="P:defense response"/>
    <property type="evidence" value="ECO:0007669"/>
    <property type="project" value="InterPro"/>
</dbReference>
<dbReference type="CDD" id="cd23106">
    <property type="entry name" value="neurotoxins_LC_scorpion"/>
    <property type="match status" value="1"/>
</dbReference>
<dbReference type="Gene3D" id="3.30.30.10">
    <property type="entry name" value="Knottin, scorpion toxin-like"/>
    <property type="match status" value="1"/>
</dbReference>
<dbReference type="InterPro" id="IPR044062">
    <property type="entry name" value="LCN-type_CS_alpha_beta_dom"/>
</dbReference>
<dbReference type="InterPro" id="IPR003614">
    <property type="entry name" value="Scorpion_toxin-like"/>
</dbReference>
<dbReference type="InterPro" id="IPR036574">
    <property type="entry name" value="Scorpion_toxin-like_sf"/>
</dbReference>
<dbReference type="InterPro" id="IPR002061">
    <property type="entry name" value="Scorpion_toxinL/defensin"/>
</dbReference>
<dbReference type="Pfam" id="PF00537">
    <property type="entry name" value="Toxin_3"/>
    <property type="match status" value="1"/>
</dbReference>
<dbReference type="SMART" id="SM00505">
    <property type="entry name" value="Knot1"/>
    <property type="match status" value="1"/>
</dbReference>
<dbReference type="SUPFAM" id="SSF57095">
    <property type="entry name" value="Scorpion toxin-like"/>
    <property type="match status" value="1"/>
</dbReference>
<dbReference type="PROSITE" id="PS51863">
    <property type="entry name" value="LCN_CSAB"/>
    <property type="match status" value="1"/>
</dbReference>
<accession>E7CZY8</accession>
<reference key="1">
    <citation type="journal article" date="2012" name="Mol. Cell. Proteomics">
        <title>Evolutionary diversification of Mesobuthus alpha-scorpion toxins affecting sodium channels.</title>
        <authorList>
            <person name="Zhu S."/>
            <person name="Peigneur S."/>
            <person name="Gao B."/>
            <person name="Lu X."/>
            <person name="Cao C."/>
            <person name="Tytgat J."/>
        </authorList>
    </citation>
    <scope>NUCLEOTIDE SEQUENCE [MRNA]</scope>
    <scope>MASS SPECTROMETRY</scope>
    <scope>SUBCELLULAR LOCATION</scope>
    <source>
        <tissue>Venom</tissue>
        <tissue>Venom gland</tissue>
    </source>
</reference>
<feature type="signal peptide" evidence="5">
    <location>
        <begin position="1" status="less than"/>
        <end position="8"/>
    </location>
</feature>
<feature type="chain" id="PRO_0000447445" description="Sodium channel neurotoxin MeuNaTxalpha-3" evidence="6">
    <location>
        <begin position="9"/>
        <end position="82"/>
    </location>
</feature>
<feature type="domain" description="LCN-type CS-alpha/beta" evidence="2">
    <location>
        <begin position="10"/>
        <end position="80"/>
    </location>
</feature>
<feature type="disulfide bond" evidence="1">
    <location>
        <begin position="20"/>
        <end position="79"/>
    </location>
</feature>
<feature type="disulfide bond" evidence="1">
    <location>
        <begin position="24"/>
        <end position="52"/>
    </location>
</feature>
<feature type="disulfide bond" evidence="1">
    <location>
        <begin position="38"/>
        <end position="62"/>
    </location>
</feature>
<feature type="disulfide bond" evidence="1">
    <location>
        <begin position="42"/>
        <end position="64"/>
    </location>
</feature>
<feature type="non-terminal residue">
    <location>
        <position position="1"/>
    </location>
</feature>
<keyword id="KW-1015">Disulfide bond</keyword>
<keyword id="KW-0872">Ion channel impairing toxin</keyword>
<keyword id="KW-0528">Neurotoxin</keyword>
<keyword id="KW-0964">Secreted</keyword>
<keyword id="KW-0732">Signal</keyword>
<keyword id="KW-0800">Toxin</keyword>
<keyword id="KW-0738">Voltage-gated sodium channel impairing toxin</keyword>
<name>SCXN3_MESEU</name>
<proteinExistence type="evidence at protein level"/>
<evidence type="ECO:0000250" key="1">
    <source>
        <dbReference type="UniProtKB" id="P86405"/>
    </source>
</evidence>
<evidence type="ECO:0000255" key="2">
    <source>
        <dbReference type="PROSITE-ProRule" id="PRU01210"/>
    </source>
</evidence>
<evidence type="ECO:0000269" key="3">
    <source>
    </source>
</evidence>
<evidence type="ECO:0000303" key="4">
    <source>
    </source>
</evidence>
<evidence type="ECO:0000305" key="5"/>
<evidence type="ECO:0000305" key="6">
    <source>
    </source>
</evidence>